<comment type="function">
    <text evidence="1">Catalyzes the epimerization of the S- and R-forms of NAD(P)HX, a damaged form of NAD(P)H that is a result of enzymatic or heat-dependent hydration. This is a prerequisite for the S-specific NAD(P)H-hydrate dehydratase to allow the repair of both epimers of NAD(P)HX.</text>
</comment>
<comment type="catalytic activity">
    <reaction>
        <text>(6R)-NADHX = (6S)-NADHX</text>
        <dbReference type="Rhea" id="RHEA:32215"/>
        <dbReference type="ChEBI" id="CHEBI:64074"/>
        <dbReference type="ChEBI" id="CHEBI:64075"/>
        <dbReference type="EC" id="5.1.99.6"/>
    </reaction>
</comment>
<comment type="catalytic activity">
    <reaction>
        <text>(6R)-NADPHX = (6S)-NADPHX</text>
        <dbReference type="Rhea" id="RHEA:32227"/>
        <dbReference type="ChEBI" id="CHEBI:64076"/>
        <dbReference type="ChEBI" id="CHEBI:64077"/>
        <dbReference type="EC" id="5.1.99.6"/>
    </reaction>
</comment>
<comment type="cofactor">
    <cofactor evidence="1">
        <name>K(+)</name>
        <dbReference type="ChEBI" id="CHEBI:29103"/>
    </cofactor>
    <text evidence="1">Binds 1 potassium ion per subunit.</text>
</comment>
<comment type="similarity">
    <text evidence="1">Belongs to the NnrE/AIBP family.</text>
</comment>
<dbReference type="EC" id="5.1.99.6"/>
<dbReference type="EMBL" id="CH933814">
    <property type="protein sequence ID" value="EDW05702.1"/>
    <property type="molecule type" value="Genomic_DNA"/>
</dbReference>
<dbReference type="RefSeq" id="XP_015016109.1">
    <property type="nucleotide sequence ID" value="XM_015160623.1"/>
</dbReference>
<dbReference type="SMR" id="B4L8C7"/>
<dbReference type="FunCoup" id="B4L8C7">
    <property type="interactions" value="1363"/>
</dbReference>
<dbReference type="EnsemblMetazoa" id="FBtr0426185">
    <property type="protein sequence ID" value="FBpp0383891"/>
    <property type="gene ID" value="FBgn0133939"/>
</dbReference>
<dbReference type="EnsemblMetazoa" id="FBtr0429384">
    <property type="protein sequence ID" value="FBpp0386848"/>
    <property type="gene ID" value="FBgn0133939"/>
</dbReference>
<dbReference type="EnsemblMetazoa" id="FBtr0432409">
    <property type="protein sequence ID" value="FBpp0389614"/>
    <property type="gene ID" value="FBgn0133939"/>
</dbReference>
<dbReference type="EnsemblMetazoa" id="XM_015160622.3">
    <property type="protein sequence ID" value="XP_015016108.1"/>
    <property type="gene ID" value="LOC6586089"/>
</dbReference>
<dbReference type="EnsemblMetazoa" id="XM_015160625.3">
    <property type="protein sequence ID" value="XP_015016111.1"/>
    <property type="gene ID" value="LOC6586089"/>
</dbReference>
<dbReference type="EnsemblMetazoa" id="XM_032733090.2">
    <property type="protein sequence ID" value="XP_032588981.1"/>
    <property type="gene ID" value="LOC6586089"/>
</dbReference>
<dbReference type="EnsemblMetazoa" id="XM_032733091.2">
    <property type="protein sequence ID" value="XP_032588982.1"/>
    <property type="gene ID" value="LOC6586089"/>
</dbReference>
<dbReference type="GeneID" id="6586089"/>
<dbReference type="KEGG" id="dmo:Dmoj_GI11178"/>
<dbReference type="eggNOG" id="KOG2585">
    <property type="taxonomic scope" value="Eukaryota"/>
</dbReference>
<dbReference type="HOGENOM" id="CLU_024853_3_0_1"/>
<dbReference type="InParanoid" id="B4L8C7"/>
<dbReference type="OMA" id="RHLFHYG"/>
<dbReference type="OrthoDB" id="10064708at2759"/>
<dbReference type="PhylomeDB" id="B4L8C7"/>
<dbReference type="Proteomes" id="UP000009192">
    <property type="component" value="Unassembled WGS sequence"/>
</dbReference>
<dbReference type="GO" id="GO:0005739">
    <property type="term" value="C:mitochondrion"/>
    <property type="evidence" value="ECO:0007669"/>
    <property type="project" value="TreeGrafter"/>
</dbReference>
<dbReference type="GO" id="GO:0046872">
    <property type="term" value="F:metal ion binding"/>
    <property type="evidence" value="ECO:0007669"/>
    <property type="project" value="UniProtKB-KW"/>
</dbReference>
<dbReference type="GO" id="GO:0052856">
    <property type="term" value="F:NAD(P)HX epimerase activity"/>
    <property type="evidence" value="ECO:0007669"/>
    <property type="project" value="UniProtKB-UniRule"/>
</dbReference>
<dbReference type="GO" id="GO:0000166">
    <property type="term" value="F:nucleotide binding"/>
    <property type="evidence" value="ECO:0007669"/>
    <property type="project" value="UniProtKB-KW"/>
</dbReference>
<dbReference type="FunFam" id="3.40.50.10260:FF:000013">
    <property type="entry name" value="NAD(P)H-hydrate epimerase"/>
    <property type="match status" value="1"/>
</dbReference>
<dbReference type="Gene3D" id="3.40.50.10260">
    <property type="entry name" value="YjeF N-terminal domain"/>
    <property type="match status" value="1"/>
</dbReference>
<dbReference type="HAMAP" id="MF_01966">
    <property type="entry name" value="NADHX_epimerase"/>
    <property type="match status" value="1"/>
</dbReference>
<dbReference type="InterPro" id="IPR004443">
    <property type="entry name" value="YjeF_N_dom"/>
</dbReference>
<dbReference type="InterPro" id="IPR036652">
    <property type="entry name" value="YjeF_N_dom_sf"/>
</dbReference>
<dbReference type="InterPro" id="IPR032976">
    <property type="entry name" value="YJEFN_prot_NAXE-like"/>
</dbReference>
<dbReference type="NCBIfam" id="TIGR00197">
    <property type="entry name" value="yjeF_nterm"/>
    <property type="match status" value="1"/>
</dbReference>
<dbReference type="PANTHER" id="PTHR13232">
    <property type="entry name" value="NAD(P)H-HYDRATE EPIMERASE"/>
    <property type="match status" value="1"/>
</dbReference>
<dbReference type="PANTHER" id="PTHR13232:SF10">
    <property type="entry name" value="NAD(P)H-HYDRATE EPIMERASE"/>
    <property type="match status" value="1"/>
</dbReference>
<dbReference type="Pfam" id="PF03853">
    <property type="entry name" value="YjeF_N"/>
    <property type="match status" value="1"/>
</dbReference>
<dbReference type="SUPFAM" id="SSF64153">
    <property type="entry name" value="YjeF N-terminal domain-like"/>
    <property type="match status" value="1"/>
</dbReference>
<dbReference type="PROSITE" id="PS51385">
    <property type="entry name" value="YJEF_N"/>
    <property type="match status" value="1"/>
</dbReference>
<accession>B4L8C7</accession>
<feature type="chain" id="PRO_0000379428" description="NAD(P)H-hydrate epimerase">
    <location>
        <begin position="1"/>
        <end position="229"/>
    </location>
</feature>
<feature type="domain" description="YjeF N-terminal" evidence="1">
    <location>
        <begin position="10"/>
        <end position="217"/>
    </location>
</feature>
<feature type="binding site" evidence="1">
    <location>
        <begin position="60"/>
        <end position="64"/>
    </location>
    <ligand>
        <name>(6S)-NADPHX</name>
        <dbReference type="ChEBI" id="CHEBI:64076"/>
    </ligand>
</feature>
<feature type="binding site" evidence="1">
    <location>
        <position position="61"/>
    </location>
    <ligand>
        <name>K(+)</name>
        <dbReference type="ChEBI" id="CHEBI:29103"/>
    </ligand>
</feature>
<feature type="binding site" evidence="1">
    <location>
        <position position="125"/>
    </location>
    <ligand>
        <name>K(+)</name>
        <dbReference type="ChEBI" id="CHEBI:29103"/>
    </ligand>
</feature>
<feature type="binding site" evidence="1">
    <location>
        <begin position="129"/>
        <end position="135"/>
    </location>
    <ligand>
        <name>(6S)-NADPHX</name>
        <dbReference type="ChEBI" id="CHEBI:64076"/>
    </ligand>
</feature>
<feature type="binding site" evidence="1">
    <location>
        <position position="158"/>
    </location>
    <ligand>
        <name>(6S)-NADPHX</name>
        <dbReference type="ChEBI" id="CHEBI:64076"/>
    </ligand>
</feature>
<feature type="binding site" evidence="1">
    <location>
        <position position="161"/>
    </location>
    <ligand>
        <name>K(+)</name>
        <dbReference type="ChEBI" id="CHEBI:29103"/>
    </ligand>
</feature>
<sequence length="229" mass="25378">MLKYLNQSEAINVDLELFNEYKFSVDQLMELAGLSCAHAIAKCFPADRFGRVLVCCGPGNNGGDGLVCARHLALMGYLPVLYYPKPTPKPLYENLAHQCKRMEIESISECPSVALAAECYDLIVDALFGFSFKPPVRADFVPVVELLQQTKLPIASVDIPSGWDVEAGKLNECDMEPTLLISLTAPKLCAKHFKGKHHFLGGRFVPPALQRKYELNLPTYPGNEMCLEL</sequence>
<protein>
    <recommendedName>
        <fullName evidence="1">NAD(P)H-hydrate epimerase</fullName>
        <ecNumber>5.1.99.6</ecNumber>
    </recommendedName>
    <alternativeName>
        <fullName evidence="1">NAD(P)HX epimerase</fullName>
    </alternativeName>
</protein>
<evidence type="ECO:0000255" key="1">
    <source>
        <dbReference type="HAMAP-Rule" id="MF_03159"/>
    </source>
</evidence>
<evidence type="ECO:0000312" key="2">
    <source>
        <dbReference type="EMBL" id="EDW05702.1"/>
    </source>
</evidence>
<keyword id="KW-0413">Isomerase</keyword>
<keyword id="KW-0479">Metal-binding</keyword>
<keyword id="KW-0520">NAD</keyword>
<keyword id="KW-0521">NADP</keyword>
<keyword id="KW-0547">Nucleotide-binding</keyword>
<keyword id="KW-0630">Potassium</keyword>
<keyword id="KW-1185">Reference proteome</keyword>
<organism>
    <name type="scientific">Drosophila mojavensis</name>
    <name type="common">Fruit fly</name>
    <dbReference type="NCBI Taxonomy" id="7230"/>
    <lineage>
        <taxon>Eukaryota</taxon>
        <taxon>Metazoa</taxon>
        <taxon>Ecdysozoa</taxon>
        <taxon>Arthropoda</taxon>
        <taxon>Hexapoda</taxon>
        <taxon>Insecta</taxon>
        <taxon>Pterygota</taxon>
        <taxon>Neoptera</taxon>
        <taxon>Endopterygota</taxon>
        <taxon>Diptera</taxon>
        <taxon>Brachycera</taxon>
        <taxon>Muscomorpha</taxon>
        <taxon>Ephydroidea</taxon>
        <taxon>Drosophilidae</taxon>
        <taxon>Drosophila</taxon>
    </lineage>
</organism>
<gene>
    <name type="ORF">GI11178</name>
</gene>
<reference evidence="2" key="1">
    <citation type="journal article" date="2007" name="Nature">
        <title>Evolution of genes and genomes on the Drosophila phylogeny.</title>
        <authorList>
            <consortium name="Drosophila 12 genomes consortium"/>
        </authorList>
    </citation>
    <scope>NUCLEOTIDE SEQUENCE [LARGE SCALE GENOMIC DNA]</scope>
    <source>
        <strain evidence="2">Tucson 15081-1352.22</strain>
    </source>
</reference>
<proteinExistence type="inferred from homology"/>
<name>NNRE_DROMO</name>